<comment type="subcellular location">
    <subcellularLocation>
        <location evidence="1">Cell inner membrane</location>
        <topology evidence="1">Multi-pass membrane protein</topology>
    </subcellularLocation>
</comment>
<comment type="similarity">
    <text evidence="1">Belongs to the UPF0060 family.</text>
</comment>
<accession>A1VWH8</accession>
<gene>
    <name type="ordered locus">Pnap_4944</name>
</gene>
<protein>
    <recommendedName>
        <fullName evidence="1">UPF0060 membrane protein Pnap_4944</fullName>
    </recommendedName>
</protein>
<feature type="chain" id="PRO_0000282243" description="UPF0060 membrane protein Pnap_4944">
    <location>
        <begin position="1"/>
        <end position="110"/>
    </location>
</feature>
<feature type="transmembrane region" description="Helical" evidence="1">
    <location>
        <begin position="8"/>
        <end position="28"/>
    </location>
</feature>
<feature type="transmembrane region" description="Helical" evidence="1">
    <location>
        <begin position="33"/>
        <end position="53"/>
    </location>
</feature>
<feature type="transmembrane region" description="Helical" evidence="1">
    <location>
        <begin position="65"/>
        <end position="85"/>
    </location>
</feature>
<feature type="transmembrane region" description="Helical" evidence="1">
    <location>
        <begin position="88"/>
        <end position="108"/>
    </location>
</feature>
<reference key="1">
    <citation type="journal article" date="2009" name="Environ. Microbiol.">
        <title>The genome of Polaromonas naphthalenivorans strain CJ2, isolated from coal tar-contaminated sediment, reveals physiological and metabolic versatility and evolution through extensive horizontal gene transfer.</title>
        <authorList>
            <person name="Yagi J.M."/>
            <person name="Sims D."/>
            <person name="Brettin T."/>
            <person name="Bruce D."/>
            <person name="Madsen E.L."/>
        </authorList>
    </citation>
    <scope>NUCLEOTIDE SEQUENCE [LARGE SCALE GENOMIC DNA]</scope>
    <source>
        <strain>CJ2</strain>
    </source>
</reference>
<organism>
    <name type="scientific">Polaromonas naphthalenivorans (strain CJ2)</name>
    <dbReference type="NCBI Taxonomy" id="365044"/>
    <lineage>
        <taxon>Bacteria</taxon>
        <taxon>Pseudomonadati</taxon>
        <taxon>Pseudomonadota</taxon>
        <taxon>Betaproteobacteria</taxon>
        <taxon>Burkholderiales</taxon>
        <taxon>Comamonadaceae</taxon>
        <taxon>Polaromonas</taxon>
    </lineage>
</organism>
<evidence type="ECO:0000255" key="1">
    <source>
        <dbReference type="HAMAP-Rule" id="MF_00010"/>
    </source>
</evidence>
<geneLocation type="plasmid">
    <name>pPNAP03</name>
</geneLocation>
<name>Y4944_POLNA</name>
<dbReference type="EMBL" id="CP000532">
    <property type="protein sequence ID" value="ABM40006.1"/>
    <property type="molecule type" value="Genomic_DNA"/>
</dbReference>
<dbReference type="RefSeq" id="WP_011798377.1">
    <property type="nucleotide sequence ID" value="NC_008759.1"/>
</dbReference>
<dbReference type="KEGG" id="pna:Pnap_4944"/>
<dbReference type="HOGENOM" id="CLU_117653_2_0_4"/>
<dbReference type="OrthoDB" id="123240at2"/>
<dbReference type="Proteomes" id="UP000000644">
    <property type="component" value="Plasmid pPNAP03"/>
</dbReference>
<dbReference type="GO" id="GO:0005886">
    <property type="term" value="C:plasma membrane"/>
    <property type="evidence" value="ECO:0007669"/>
    <property type="project" value="UniProtKB-SubCell"/>
</dbReference>
<dbReference type="HAMAP" id="MF_00010">
    <property type="entry name" value="UPF0060"/>
    <property type="match status" value="1"/>
</dbReference>
<dbReference type="InterPro" id="IPR003844">
    <property type="entry name" value="UPF0060"/>
</dbReference>
<dbReference type="NCBIfam" id="NF002586">
    <property type="entry name" value="PRK02237.1"/>
    <property type="match status" value="1"/>
</dbReference>
<dbReference type="PANTHER" id="PTHR36116">
    <property type="entry name" value="UPF0060 MEMBRANE PROTEIN YNFA"/>
    <property type="match status" value="1"/>
</dbReference>
<dbReference type="PANTHER" id="PTHR36116:SF1">
    <property type="entry name" value="UPF0060 MEMBRANE PROTEIN YNFA"/>
    <property type="match status" value="1"/>
</dbReference>
<dbReference type="Pfam" id="PF02694">
    <property type="entry name" value="UPF0060"/>
    <property type="match status" value="1"/>
</dbReference>
<keyword id="KW-0997">Cell inner membrane</keyword>
<keyword id="KW-1003">Cell membrane</keyword>
<keyword id="KW-0472">Membrane</keyword>
<keyword id="KW-0614">Plasmid</keyword>
<keyword id="KW-1185">Reference proteome</keyword>
<keyword id="KW-0812">Transmembrane</keyword>
<keyword id="KW-1133">Transmembrane helix</keyword>
<sequence length="110" mass="11720">MELLRLAILFAVTALAEIVGCYLPWLVLKQGKSLLLLVPAAMSLGLFAWLLTLHPSAAGRTYAAYGGMYIAVALGWLRFVDGIALTRWDLSGAAIALVGMAVIVMQPSTT</sequence>
<proteinExistence type="inferred from homology"/>